<organism>
    <name type="scientific">Crotalus durissus cumanensis</name>
    <name type="common">South American rattlesnake</name>
    <dbReference type="NCBI Taxonomy" id="184542"/>
    <lineage>
        <taxon>Eukaryota</taxon>
        <taxon>Metazoa</taxon>
        <taxon>Chordata</taxon>
        <taxon>Craniata</taxon>
        <taxon>Vertebrata</taxon>
        <taxon>Euteleostomi</taxon>
        <taxon>Lepidosauria</taxon>
        <taxon>Squamata</taxon>
        <taxon>Bifurcata</taxon>
        <taxon>Unidentata</taxon>
        <taxon>Episquamata</taxon>
        <taxon>Toxicofera</taxon>
        <taxon>Serpentes</taxon>
        <taxon>Colubroidea</taxon>
        <taxon>Viperidae</taxon>
        <taxon>Crotalinae</taxon>
        <taxon>Crotalus</taxon>
    </lineage>
</organism>
<accession>P0DKX2</accession>
<comment type="function">
    <text evidence="3">Thrombin-like snake venom serine protease that coagulates human plasma and bovine fibrinogen by hydrolysis of the alpha chains (FGA) (minimum coagulation dose is 120 ug on fibrinogen). Has fibrinogenolytic activities, and degrades preferentially the Aalpha chain (FGA). Shows amidolytic activity toward N-benzoyl-L-Arg-p-nitroanilide, has a lower activity than Cdc SII. In vivo, intravenous injection induces defibrin(ogen)ation and a loss of the righting reflex and opisthotoxins, together with a typical gyroxin-like effect (18-20 minutes). Subcutaneous injection into the footpads induces moderate edema. Potentiates local hemorrhagic activity induced by metalloproteinases (BaP1).</text>
</comment>
<comment type="activity regulation">
    <text evidence="3">Strongly inhibited by PMSF. Not inhibited by EDTA, aprotinin, pepstatin, leupeptin, and bestatin.</text>
</comment>
<comment type="biophysicochemical properties">
    <kinetics>
        <KM evidence="3">0.034 mM for N-benzoyl-L-Arg-p-nitroanilide</KM>
        <Vmax evidence="3">0.038 nmol/min/mg enzyme</Vmax>
    </kinetics>
</comment>
<comment type="subunit">
    <text evidence="1">Monomer.</text>
</comment>
<comment type="subcellular location">
    <subcellularLocation>
        <location>Secreted</location>
    </subcellularLocation>
</comment>
<comment type="tissue specificity">
    <text>Expressed by the venom gland.</text>
</comment>
<comment type="mass spectrometry" mass="28561.4" method="MALDI" evidence="3"/>
<comment type="miscellaneous">
    <text evidence="4">Negative results: does not induce myotoxicity or hemorrhage, when injected intramuscularly. Is not lethal when administered either intravenously or intraperitoneally into mice (maximum dose tested is 20 ug) (PubMed:23178323).</text>
</comment>
<comment type="similarity">
    <text evidence="2">Belongs to the peptidase S1 family. Snake venom subfamily.</text>
</comment>
<sequence length="10" mass="1033">VIGGDECNIN</sequence>
<protein>
    <recommendedName>
        <fullName>Thrombin-like enzyme Cdc SI</fullName>
        <shortName>SVTLE</shortName>
        <ecNumber>3.4.21.-</ecNumber>
    </recommendedName>
    <alternativeName>
        <fullName>Fibrinogen-clotting enzyme</fullName>
    </alternativeName>
    <alternativeName>
        <fullName>Snake venom serine protease</fullName>
        <shortName>SVSP</shortName>
    </alternativeName>
</protein>
<evidence type="ECO:0000250" key="1"/>
<evidence type="ECO:0000255" key="2">
    <source>
        <dbReference type="PROSITE-ProRule" id="PRU00274"/>
    </source>
</evidence>
<evidence type="ECO:0000269" key="3">
    <source>
    </source>
</evidence>
<evidence type="ECO:0000305" key="4">
    <source>
    </source>
</evidence>
<reference key="1">
    <citation type="journal article" date="2013" name="Toxicon">
        <title>Biochemical and biological characterization of a two serine proteinases from Colombian Crotalus durissus cumanensis snake venom.</title>
        <authorList>
            <person name="Patino A.C."/>
            <person name="Pereanez J.A."/>
            <person name="Gutierrez J.M."/>
            <person name="Rucavado A."/>
        </authorList>
    </citation>
    <scope>PROTEIN SEQUENCE</scope>
    <scope>FUNCTION</scope>
    <scope>ACTIVITY REGULATION</scope>
    <scope>BIOPHYSICOCHEMICAL PROPERTIES</scope>
    <scope>MASS SPECTROMETRY</scope>
    <scope>IDENTIFICATION BY MASS SPECTROMETRY</scope>
    <source>
        <tissue>Venom</tissue>
    </source>
</reference>
<dbReference type="EC" id="3.4.21.-"/>
<dbReference type="SABIO-RK" id="P0DKX2"/>
<dbReference type="GO" id="GO:0005576">
    <property type="term" value="C:extracellular region"/>
    <property type="evidence" value="ECO:0007669"/>
    <property type="project" value="UniProtKB-SubCell"/>
</dbReference>
<dbReference type="GO" id="GO:0008236">
    <property type="term" value="F:serine-type peptidase activity"/>
    <property type="evidence" value="ECO:0007669"/>
    <property type="project" value="UniProtKB-KW"/>
</dbReference>
<dbReference type="GO" id="GO:0090729">
    <property type="term" value="F:toxin activity"/>
    <property type="evidence" value="ECO:0007669"/>
    <property type="project" value="UniProtKB-KW"/>
</dbReference>
<dbReference type="GO" id="GO:0006508">
    <property type="term" value="P:proteolysis"/>
    <property type="evidence" value="ECO:0007669"/>
    <property type="project" value="UniProtKB-KW"/>
</dbReference>
<keyword id="KW-1204">Blood coagulation cascade activating toxin</keyword>
<keyword id="KW-0903">Direct protein sequencing</keyword>
<keyword id="KW-1015">Disulfide bond</keyword>
<keyword id="KW-1206">Fibrinogenolytic toxin</keyword>
<keyword id="KW-1199">Hemostasis impairing toxin</keyword>
<keyword id="KW-0378">Hydrolase</keyword>
<keyword id="KW-0645">Protease</keyword>
<keyword id="KW-0964">Secreted</keyword>
<keyword id="KW-0720">Serine protease</keyword>
<keyword id="KW-0800">Toxin</keyword>
<feature type="chain" id="PRO_0000421249" description="Thrombin-like enzyme Cdc SI">
    <location>
        <begin position="1"/>
        <end position="10" status="greater than"/>
    </location>
</feature>
<feature type="domain" description="Peptidase S1" evidence="2">
    <location>
        <begin position="1"/>
        <end status="unknown"/>
    </location>
</feature>
<feature type="disulfide bond" evidence="2">
    <location>
        <begin position="7"/>
        <end status="unknown"/>
    </location>
</feature>
<feature type="unsure residue" description="Assigned by comparison with orthologs">
    <location>
        <position position="7"/>
    </location>
</feature>
<feature type="non-terminal residue">
    <location>
        <position position="10"/>
    </location>
</feature>
<name>VSP1_CRODM</name>
<proteinExistence type="evidence at protein level"/>